<name>CYOE_MARN8</name>
<protein>
    <recommendedName>
        <fullName evidence="1">Protoheme IX farnesyltransferase</fullName>
        <ecNumber evidence="1">2.5.1.141</ecNumber>
    </recommendedName>
    <alternativeName>
        <fullName evidence="1">Heme B farnesyltransferase</fullName>
    </alternativeName>
    <alternativeName>
        <fullName evidence="1">Heme O synthase</fullName>
    </alternativeName>
</protein>
<reference key="1">
    <citation type="journal article" date="2011" name="Appl. Environ. Microbiol.">
        <title>Genomic potential of Marinobacter aquaeolei, a biogeochemical 'opportunitroph'.</title>
        <authorList>
            <person name="Singer E."/>
            <person name="Webb E.A."/>
            <person name="Nelson W.C."/>
            <person name="Heidelberg J.F."/>
            <person name="Ivanova N."/>
            <person name="Pati A."/>
            <person name="Edwards K.J."/>
        </authorList>
    </citation>
    <scope>NUCLEOTIDE SEQUENCE [LARGE SCALE GENOMIC DNA]</scope>
    <source>
        <strain>ATCC 700491 / DSM 11845 / VT8</strain>
    </source>
</reference>
<feature type="chain" id="PRO_0000326909" description="Protoheme IX farnesyltransferase">
    <location>
        <begin position="1"/>
        <end position="302"/>
    </location>
</feature>
<feature type="transmembrane region" description="Helical" evidence="1">
    <location>
        <begin position="28"/>
        <end position="48"/>
    </location>
</feature>
<feature type="transmembrane region" description="Helical" evidence="1">
    <location>
        <begin position="50"/>
        <end position="70"/>
    </location>
</feature>
<feature type="transmembrane region" description="Helical" evidence="1">
    <location>
        <begin position="95"/>
        <end position="115"/>
    </location>
</feature>
<feature type="transmembrane region" description="Helical" evidence="1">
    <location>
        <begin position="122"/>
        <end position="142"/>
    </location>
</feature>
<feature type="transmembrane region" description="Helical" evidence="1">
    <location>
        <begin position="150"/>
        <end position="170"/>
    </location>
</feature>
<feature type="transmembrane region" description="Helical" evidence="1">
    <location>
        <begin position="176"/>
        <end position="196"/>
    </location>
</feature>
<feature type="transmembrane region" description="Helical" evidence="1">
    <location>
        <begin position="221"/>
        <end position="241"/>
    </location>
</feature>
<feature type="transmembrane region" description="Helical" evidence="1">
    <location>
        <begin position="243"/>
        <end position="263"/>
    </location>
</feature>
<feature type="transmembrane region" description="Helical" evidence="1">
    <location>
        <begin position="282"/>
        <end position="302"/>
    </location>
</feature>
<dbReference type="EC" id="2.5.1.141" evidence="1"/>
<dbReference type="EMBL" id="CP000514">
    <property type="protein sequence ID" value="ABM17177.1"/>
    <property type="status" value="ALT_INIT"/>
    <property type="molecule type" value="Genomic_DNA"/>
</dbReference>
<dbReference type="RefSeq" id="WP_011783650.1">
    <property type="nucleotide sequence ID" value="NC_008740.1"/>
</dbReference>
<dbReference type="SMR" id="A1TWQ8"/>
<dbReference type="STRING" id="351348.Maqu_0070"/>
<dbReference type="KEGG" id="maq:Maqu_0070"/>
<dbReference type="eggNOG" id="COG0109">
    <property type="taxonomic scope" value="Bacteria"/>
</dbReference>
<dbReference type="HOGENOM" id="CLU_029631_0_2_6"/>
<dbReference type="OrthoDB" id="9814417at2"/>
<dbReference type="UniPathway" id="UPA00834">
    <property type="reaction ID" value="UER00712"/>
</dbReference>
<dbReference type="Proteomes" id="UP000000998">
    <property type="component" value="Chromosome"/>
</dbReference>
<dbReference type="GO" id="GO:0005886">
    <property type="term" value="C:plasma membrane"/>
    <property type="evidence" value="ECO:0007669"/>
    <property type="project" value="UniProtKB-SubCell"/>
</dbReference>
<dbReference type="GO" id="GO:0008495">
    <property type="term" value="F:protoheme IX farnesyltransferase activity"/>
    <property type="evidence" value="ECO:0007669"/>
    <property type="project" value="UniProtKB-UniRule"/>
</dbReference>
<dbReference type="GO" id="GO:0048034">
    <property type="term" value="P:heme O biosynthetic process"/>
    <property type="evidence" value="ECO:0007669"/>
    <property type="project" value="UniProtKB-UniRule"/>
</dbReference>
<dbReference type="CDD" id="cd13957">
    <property type="entry name" value="PT_UbiA_Cox10"/>
    <property type="match status" value="1"/>
</dbReference>
<dbReference type="FunFam" id="1.10.357.140:FF:000001">
    <property type="entry name" value="Protoheme IX farnesyltransferase"/>
    <property type="match status" value="1"/>
</dbReference>
<dbReference type="Gene3D" id="1.10.357.140">
    <property type="entry name" value="UbiA prenyltransferase"/>
    <property type="match status" value="1"/>
</dbReference>
<dbReference type="HAMAP" id="MF_00154">
    <property type="entry name" value="CyoE_CtaB"/>
    <property type="match status" value="1"/>
</dbReference>
<dbReference type="InterPro" id="IPR006369">
    <property type="entry name" value="Protohaem_IX_farnesylTrfase"/>
</dbReference>
<dbReference type="InterPro" id="IPR000537">
    <property type="entry name" value="UbiA_prenyltransferase"/>
</dbReference>
<dbReference type="InterPro" id="IPR030470">
    <property type="entry name" value="UbiA_prenylTrfase_CS"/>
</dbReference>
<dbReference type="InterPro" id="IPR044878">
    <property type="entry name" value="UbiA_sf"/>
</dbReference>
<dbReference type="NCBIfam" id="TIGR01473">
    <property type="entry name" value="cyoE_ctaB"/>
    <property type="match status" value="1"/>
</dbReference>
<dbReference type="NCBIfam" id="NF003349">
    <property type="entry name" value="PRK04375.1-2"/>
    <property type="match status" value="1"/>
</dbReference>
<dbReference type="PANTHER" id="PTHR43448:SF7">
    <property type="entry name" value="4-HYDROXYBENZOATE SOLANESYLTRANSFERASE"/>
    <property type="match status" value="1"/>
</dbReference>
<dbReference type="PANTHER" id="PTHR43448">
    <property type="entry name" value="PROTOHEME IX FARNESYLTRANSFERASE, MITOCHONDRIAL"/>
    <property type="match status" value="1"/>
</dbReference>
<dbReference type="Pfam" id="PF01040">
    <property type="entry name" value="UbiA"/>
    <property type="match status" value="1"/>
</dbReference>
<dbReference type="PROSITE" id="PS00943">
    <property type="entry name" value="UBIA"/>
    <property type="match status" value="1"/>
</dbReference>
<keyword id="KW-0997">Cell inner membrane</keyword>
<keyword id="KW-1003">Cell membrane</keyword>
<keyword id="KW-0350">Heme biosynthesis</keyword>
<keyword id="KW-0472">Membrane</keyword>
<keyword id="KW-0808">Transferase</keyword>
<keyword id="KW-0812">Transmembrane</keyword>
<keyword id="KW-1133">Transmembrane helix</keyword>
<gene>
    <name evidence="1" type="primary">cyoE</name>
    <name type="ordered locus">Maqu_0070</name>
</gene>
<accession>A1TWQ8</accession>
<organism>
    <name type="scientific">Marinobacter nauticus (strain ATCC 700491 / DSM 11845 / VT8)</name>
    <name type="common">Marinobacter aquaeolei</name>
    <dbReference type="NCBI Taxonomy" id="351348"/>
    <lineage>
        <taxon>Bacteria</taxon>
        <taxon>Pseudomonadati</taxon>
        <taxon>Pseudomonadota</taxon>
        <taxon>Gammaproteobacteria</taxon>
        <taxon>Pseudomonadales</taxon>
        <taxon>Marinobacteraceae</taxon>
        <taxon>Marinobacter</taxon>
    </lineage>
</organism>
<evidence type="ECO:0000255" key="1">
    <source>
        <dbReference type="HAMAP-Rule" id="MF_00154"/>
    </source>
</evidence>
<evidence type="ECO:0000305" key="2"/>
<sequence length="302" mass="32865">MKALPIQNPTHASTISWRDYLELTKPRVVALMILTSVIGMLLAAPGVPEWSVLLFGNLGIALLAGAAAVVNHVVDQKIDTVMARTRKRPVATGRIAPLDALLFATVLAALGMVVLVWQVNELTAWLTLASLVGYAGVYTLFLKRATPQNIVIGGLAGAMPPLLGWTAVTGQVEGHALLLVLIIFAWTPPHFWALAIHRKEEYAKAGIPMLPVTHGNRYTELHILLYTLMLLAVSLLPFVTGMSGGIYLVGALALGLRFLQYAVRLLRGDDRRVALNTFKYSITYLMALFVVLLVDHFVFVPA</sequence>
<proteinExistence type="inferred from homology"/>
<comment type="function">
    <text evidence="1">Converts heme B (protoheme IX) to heme O by substitution of the vinyl group on carbon 2 of heme B porphyrin ring with a hydroxyethyl farnesyl side group.</text>
</comment>
<comment type="catalytic activity">
    <reaction evidence="1">
        <text>heme b + (2E,6E)-farnesyl diphosphate + H2O = Fe(II)-heme o + diphosphate</text>
        <dbReference type="Rhea" id="RHEA:28070"/>
        <dbReference type="ChEBI" id="CHEBI:15377"/>
        <dbReference type="ChEBI" id="CHEBI:33019"/>
        <dbReference type="ChEBI" id="CHEBI:60344"/>
        <dbReference type="ChEBI" id="CHEBI:60530"/>
        <dbReference type="ChEBI" id="CHEBI:175763"/>
        <dbReference type="EC" id="2.5.1.141"/>
    </reaction>
</comment>
<comment type="pathway">
    <text evidence="1">Porphyrin-containing compound metabolism; heme O biosynthesis; heme O from protoheme: step 1/1.</text>
</comment>
<comment type="subcellular location">
    <subcellularLocation>
        <location evidence="1">Cell inner membrane</location>
        <topology evidence="1">Multi-pass membrane protein</topology>
    </subcellularLocation>
</comment>
<comment type="miscellaneous">
    <text evidence="1">Carbon 2 of the heme B porphyrin ring is defined according to the Fischer nomenclature.</text>
</comment>
<comment type="similarity">
    <text evidence="1">Belongs to the UbiA prenyltransferase family. Protoheme IX farnesyltransferase subfamily.</text>
</comment>
<comment type="sequence caution" evidence="2">
    <conflict type="erroneous initiation">
        <sequence resource="EMBL-CDS" id="ABM17177"/>
    </conflict>
</comment>